<accession>C0JB48</accession>
<comment type="function">
    <text evidence="1 3">Dermonecrotic toxins cleave the phosphodiester linkage between the phosphate and headgroup of certain phospholipids (sphingolipid and lysolipid substrates), forming an alcohol (often choline) and a cyclic phosphate (By similarity). This toxin acts on sphingomyelin (SM) (By similarity). It may also act on ceramide phosphoethanolamine (CPE), lysophosphatidylcholine (LPC) and lysophosphatidylethanolamine (LPE), but not on lysophosphatidylserine (LPS), and lysophosphatidylglycerol (LPG) (By similarity). It acts by transphosphatidylation, releasing exclusively cyclic phosphate products as second products (By similarity). Induces dermonecrosis, hemolysis, increased vascular permeability, edema, inflammatory response, and platelet aggregation (By similarity).</text>
</comment>
<comment type="catalytic activity">
    <reaction evidence="1">
        <text>an N-(acyl)-sphingosylphosphocholine = an N-(acyl)-sphingosyl-1,3-cyclic phosphate + choline</text>
        <dbReference type="Rhea" id="RHEA:60652"/>
        <dbReference type="ChEBI" id="CHEBI:15354"/>
        <dbReference type="ChEBI" id="CHEBI:64583"/>
        <dbReference type="ChEBI" id="CHEBI:143892"/>
    </reaction>
</comment>
<comment type="catalytic activity">
    <reaction evidence="1">
        <text>an N-(acyl)-sphingosylphosphoethanolamine = an N-(acyl)-sphingosyl-1,3-cyclic phosphate + ethanolamine</text>
        <dbReference type="Rhea" id="RHEA:60648"/>
        <dbReference type="ChEBI" id="CHEBI:57603"/>
        <dbReference type="ChEBI" id="CHEBI:143891"/>
        <dbReference type="ChEBI" id="CHEBI:143892"/>
    </reaction>
</comment>
<comment type="catalytic activity">
    <reaction evidence="1">
        <text>a 1-acyl-sn-glycero-3-phosphocholine = a 1-acyl-sn-glycero-2,3-cyclic phosphate + choline</text>
        <dbReference type="Rhea" id="RHEA:60700"/>
        <dbReference type="ChEBI" id="CHEBI:15354"/>
        <dbReference type="ChEBI" id="CHEBI:58168"/>
        <dbReference type="ChEBI" id="CHEBI:143947"/>
    </reaction>
</comment>
<comment type="catalytic activity">
    <reaction evidence="1">
        <text>a 1-acyl-sn-glycero-3-phosphoethanolamine = a 1-acyl-sn-glycero-2,3-cyclic phosphate + ethanolamine</text>
        <dbReference type="Rhea" id="RHEA:60704"/>
        <dbReference type="ChEBI" id="CHEBI:57603"/>
        <dbReference type="ChEBI" id="CHEBI:64381"/>
        <dbReference type="ChEBI" id="CHEBI:143947"/>
    </reaction>
</comment>
<comment type="cofactor">
    <cofactor evidence="5">
        <name>Mg(2+)</name>
        <dbReference type="ChEBI" id="CHEBI:18420"/>
    </cofactor>
    <text evidence="5">Binds 1 Mg(2+) ion per subunit.</text>
</comment>
<comment type="subcellular location">
    <subcellularLocation>
        <location evidence="8">Secreted</location>
    </subcellularLocation>
</comment>
<comment type="tissue specificity">
    <text evidence="8">Expressed by the venom gland.</text>
</comment>
<comment type="similarity">
    <text evidence="7">Belongs to the arthropod phospholipase D family. Class II subfamily.</text>
</comment>
<comment type="caution">
    <text evidence="1 2 4">The most common activity assay for dermonecrotic toxins detects enzymatic activity by monitoring choline release from substrate. Liberation of choline from sphingomyelin (SM) or lysophosphatidylcholine (LPC) is commonly assumed to result from substrate hydrolysis, giving either ceramide-1-phosphate (C1P) or lysophosphatidic acid (LPA), respectively, as a second product. However, two studies from Lajoie and colleagues (2013 and 2015) report the observation of exclusive formation of cyclic phosphate products as second products, resulting from intramolecular transphosphatidylation. Cyclic phosphates have vastly different biological properties from their monoester counterparts, and they may be relevant to the pathology of brown spider envenomation.</text>
</comment>
<dbReference type="EC" id="4.6.1.-" evidence="4"/>
<dbReference type="EMBL" id="FJ171483">
    <property type="protein sequence ID" value="ACN48979.1"/>
    <property type="molecule type" value="mRNA"/>
</dbReference>
<dbReference type="SMR" id="C0JB48"/>
<dbReference type="GO" id="GO:0005576">
    <property type="term" value="C:extracellular region"/>
    <property type="evidence" value="ECO:0007669"/>
    <property type="project" value="UniProtKB-SubCell"/>
</dbReference>
<dbReference type="GO" id="GO:0016829">
    <property type="term" value="F:lyase activity"/>
    <property type="evidence" value="ECO:0007669"/>
    <property type="project" value="UniProtKB-KW"/>
</dbReference>
<dbReference type="GO" id="GO:0046872">
    <property type="term" value="F:metal ion binding"/>
    <property type="evidence" value="ECO:0007669"/>
    <property type="project" value="UniProtKB-KW"/>
</dbReference>
<dbReference type="GO" id="GO:0008081">
    <property type="term" value="F:phosphoric diester hydrolase activity"/>
    <property type="evidence" value="ECO:0007669"/>
    <property type="project" value="InterPro"/>
</dbReference>
<dbReference type="GO" id="GO:0090729">
    <property type="term" value="F:toxin activity"/>
    <property type="evidence" value="ECO:0007669"/>
    <property type="project" value="UniProtKB-KW"/>
</dbReference>
<dbReference type="GO" id="GO:0031640">
    <property type="term" value="P:killing of cells of another organism"/>
    <property type="evidence" value="ECO:0007669"/>
    <property type="project" value="UniProtKB-KW"/>
</dbReference>
<dbReference type="GO" id="GO:0016042">
    <property type="term" value="P:lipid catabolic process"/>
    <property type="evidence" value="ECO:0007669"/>
    <property type="project" value="UniProtKB-KW"/>
</dbReference>
<dbReference type="CDD" id="cd08576">
    <property type="entry name" value="GDPD_like_SMaseD_PLD"/>
    <property type="match status" value="1"/>
</dbReference>
<dbReference type="Gene3D" id="3.20.20.190">
    <property type="entry name" value="Phosphatidylinositol (PI) phosphodiesterase"/>
    <property type="match status" value="1"/>
</dbReference>
<dbReference type="InterPro" id="IPR017946">
    <property type="entry name" value="PLC-like_Pdiesterase_TIM-brl"/>
</dbReference>
<dbReference type="SUPFAM" id="SSF51695">
    <property type="entry name" value="PLC-like phosphodiesterases"/>
    <property type="match status" value="1"/>
</dbReference>
<feature type="chain" id="PRO_0000392862" description="Dermonecrotic toxin LafSicTox-betaIE2">
    <location>
        <begin position="1" status="less than"/>
        <end position="276"/>
    </location>
</feature>
<feature type="active site" evidence="5">
    <location>
        <position position="5"/>
    </location>
</feature>
<feature type="active site" description="Nucleophile" evidence="5">
    <location>
        <position position="41"/>
    </location>
</feature>
<feature type="binding site" evidence="5">
    <location>
        <position position="25"/>
    </location>
    <ligand>
        <name>Mg(2+)</name>
        <dbReference type="ChEBI" id="CHEBI:18420"/>
    </ligand>
</feature>
<feature type="binding site" evidence="5">
    <location>
        <position position="27"/>
    </location>
    <ligand>
        <name>Mg(2+)</name>
        <dbReference type="ChEBI" id="CHEBI:18420"/>
    </ligand>
</feature>
<feature type="binding site" evidence="5">
    <location>
        <position position="85"/>
    </location>
    <ligand>
        <name>Mg(2+)</name>
        <dbReference type="ChEBI" id="CHEBI:18420"/>
    </ligand>
</feature>
<feature type="disulfide bond" evidence="3">
    <location>
        <begin position="45"/>
        <end position="51"/>
    </location>
</feature>
<feature type="disulfide bond" evidence="3">
    <location>
        <begin position="47"/>
        <end position="189"/>
    </location>
</feature>
<feature type="non-terminal residue">
    <location>
        <position position="1"/>
    </location>
</feature>
<protein>
    <recommendedName>
        <fullName evidence="6">Dermonecrotic toxin LafSicTox-betaIE2</fullName>
        <ecNumber evidence="4">4.6.1.-</ecNumber>
    </recommendedName>
    <alternativeName>
        <fullName>Phospholipase D</fullName>
        <shortName>PLD</shortName>
    </alternativeName>
    <alternativeName>
        <fullName>Sphingomyelin phosphodiesterase D</fullName>
        <shortName>SMD</shortName>
        <shortName>SMase D</shortName>
        <shortName>Sphingomyelinase D</shortName>
    </alternativeName>
</protein>
<organism>
    <name type="scientific">Loxosceles aff. spinulosa (strain GJB-2008)</name>
    <name type="common">Recluse spider</name>
    <dbReference type="NCBI Taxonomy" id="575951"/>
    <lineage>
        <taxon>Eukaryota</taxon>
        <taxon>Metazoa</taxon>
        <taxon>Ecdysozoa</taxon>
        <taxon>Arthropoda</taxon>
        <taxon>Chelicerata</taxon>
        <taxon>Arachnida</taxon>
        <taxon>Araneae</taxon>
        <taxon>Araneomorphae</taxon>
        <taxon>Haplogynae</taxon>
        <taxon>Scytodoidea</taxon>
        <taxon>Sicariidae</taxon>
        <taxon>Loxosceles</taxon>
    </lineage>
</organism>
<keyword id="KW-0204">Cytolysis</keyword>
<keyword id="KW-1061">Dermonecrotic toxin</keyword>
<keyword id="KW-1015">Disulfide bond</keyword>
<keyword id="KW-0354">Hemolysis</keyword>
<keyword id="KW-0442">Lipid degradation</keyword>
<keyword id="KW-0443">Lipid metabolism</keyword>
<keyword id="KW-0456">Lyase</keyword>
<keyword id="KW-0460">Magnesium</keyword>
<keyword id="KW-0479">Metal-binding</keyword>
<keyword id="KW-0964">Secreted</keyword>
<keyword id="KW-0800">Toxin</keyword>
<evidence type="ECO:0000250" key="1">
    <source>
        <dbReference type="UniProtKB" id="A0A0D4WTV1"/>
    </source>
</evidence>
<evidence type="ECO:0000250" key="2">
    <source>
        <dbReference type="UniProtKB" id="A0A0D4WV12"/>
    </source>
</evidence>
<evidence type="ECO:0000250" key="3">
    <source>
        <dbReference type="UniProtKB" id="P0CE80"/>
    </source>
</evidence>
<evidence type="ECO:0000250" key="4">
    <source>
        <dbReference type="UniProtKB" id="Q4ZFU2"/>
    </source>
</evidence>
<evidence type="ECO:0000250" key="5">
    <source>
        <dbReference type="UniProtKB" id="Q8I914"/>
    </source>
</evidence>
<evidence type="ECO:0000303" key="6">
    <source>
    </source>
</evidence>
<evidence type="ECO:0000305" key="7"/>
<evidence type="ECO:0000305" key="8">
    <source>
    </source>
</evidence>
<reference key="1">
    <citation type="journal article" date="2009" name="Mol. Biol. Evol.">
        <title>Molecular evolution, functional variation, and proposed nomenclature of the gene family that includes sphingomyelinase D in sicariid spider venoms.</title>
        <authorList>
            <person name="Binford G.J."/>
            <person name="Bodner M.R."/>
            <person name="Cordes M.H."/>
            <person name="Baldwin K.L."/>
            <person name="Rynerson M.R."/>
            <person name="Burns S.N."/>
            <person name="Zobel-Thropp P.A."/>
        </authorList>
    </citation>
    <scope>NUCLEOTIDE SEQUENCE [MRNA]</scope>
    <scope>NOMENCLATURE</scope>
    <source>
        <strain>Ruacana</strain>
        <tissue>Venom gland</tissue>
    </source>
</reference>
<name>B1S_LOXAS</name>
<sequence length="276" mass="31287">FALAHMVNDFDILKSYMDEGANGIETDITFTSEGEPEKAFHGVPCDCKRWCRRQVGIDDYLRHLSDLTTPGNPKFRDNLVVVVLDLKLNGLSEEALRNGGLRLADKLAAHYWSGNRKARAYFIVSVPKTSESEFMKSFRKELDEINFGEMSAKIGFDFTDNGEFSGTQKVYETLGIDEHIWASDGITNCIPLLFRGISRLEDLIHQRDEPGYKYISKVYAWTYDKESSVTLALSLGVDGVMTNYADFVIGILNKPEHSSKYRLATYEDNPFEKFTA</sequence>
<proteinExistence type="evidence at transcript level"/>